<comment type="function">
    <text evidence="3">May be involved in plant defense against cyst nematode pathogens.</text>
</comment>
<comment type="catalytic activity">
    <reaction evidence="5">
        <text>Hydrolysis of (1-&gt;3)-beta-D-glucosidic linkages in (1-&gt;3)-beta-D-glucans.</text>
        <dbReference type="EC" id="3.2.1.39"/>
    </reaction>
</comment>
<comment type="subunit">
    <text evidence="3">(Microbial infection) Interacts with the 30C02 effector protein (AC G3GD54) of the beet cyst nematode Heterodera schachtii. Interaction with the 30C02 effector protein may potentially suppress beta-1,3-glucanase activity and plant defense.</text>
</comment>
<comment type="subcellular location">
    <subcellularLocation>
        <location evidence="5">Secreted</location>
    </subcellularLocation>
</comment>
<comment type="induction">
    <text evidence="4">Induced by infection with the Cucumber mosaic virus (CMV).</text>
</comment>
<comment type="induction">
    <text evidence="3">(Microbial infection) Specifically down-regulated by Heterodera schachtii (cyst nematodes) in nematode-induced syncytia.</text>
</comment>
<comment type="similarity">
    <text evidence="5">Belongs to the glycosyl hydrolase 17 family.</text>
</comment>
<comment type="sequence caution" evidence="5">
    <conflict type="frameshift">
        <sequence resource="EMBL-CDS" id="AAM64664"/>
    </conflict>
</comment>
<comment type="sequence caution" evidence="5">
    <conflict type="frameshift">
        <sequence resource="EMBL-CDS" id="CAB10405"/>
    </conflict>
</comment>
<comment type="sequence caution" evidence="5">
    <conflict type="frameshift">
        <sequence resource="EMBL-CDS" id="CAB78668"/>
    </conflict>
</comment>
<sequence length="344" mass="37712">MTTLFLLIALFITTILNPTSGESVGVCYGMMGNNLPSQSDTIALFRQNNIRRVRLYDPNQAALNALRNTGIEVIIGVPNTDLRSLTNPSSARSWLQNNVLNYYPAVSFKYIAVGNEVSPSNGGDVVLPAMRNVYDALRGANLQDRIKVSTAIDMTLIGNSFPPSSGEFRGDVRWYIDPVIGFLTSTNSALLANIYPYFSYVDNPRDISLSYALFTSPSVVVWDGSRGYQNLFDALLDVVYSAVERSGGGSLPVVVSESGWPSNGGNAASFDNARAFYTNLASRVRENRGTPKRPGRGVETYLFAMFDENQKSPEIEKNFGLFFPNKQPKFPITFSAARDGTAVE</sequence>
<accession>Q8VZJ2</accession>
<accession>O23473</accession>
<keyword id="KW-0326">Glycosidase</keyword>
<keyword id="KW-0378">Hydrolase</keyword>
<keyword id="KW-0611">Plant defense</keyword>
<keyword id="KW-1185">Reference proteome</keyword>
<keyword id="KW-0964">Secreted</keyword>
<keyword id="KW-0732">Signal</keyword>
<protein>
    <recommendedName>
        <fullName evidence="5">Probable glucan endo-1,3-beta-glucosidase At4g16260</fullName>
        <ecNumber evidence="5">3.2.1.39</ecNumber>
    </recommendedName>
</protein>
<feature type="signal peptide" evidence="2">
    <location>
        <begin position="1"/>
        <end position="21"/>
    </location>
</feature>
<feature type="chain" id="PRO_0000434700" description="Probable glucan endo-1,3-beta-glucosidase At4g16260" evidence="2">
    <location>
        <begin position="22"/>
        <end position="344"/>
    </location>
</feature>
<feature type="active site" description="Proton donor" evidence="1">
    <location>
        <position position="116"/>
    </location>
</feature>
<feature type="active site" description="Nucleophile" evidence="1">
    <location>
        <position position="257"/>
    </location>
</feature>
<proteinExistence type="evidence at protein level"/>
<organism>
    <name type="scientific">Arabidopsis thaliana</name>
    <name type="common">Mouse-ear cress</name>
    <dbReference type="NCBI Taxonomy" id="3702"/>
    <lineage>
        <taxon>Eukaryota</taxon>
        <taxon>Viridiplantae</taxon>
        <taxon>Streptophyta</taxon>
        <taxon>Embryophyta</taxon>
        <taxon>Tracheophyta</taxon>
        <taxon>Spermatophyta</taxon>
        <taxon>Magnoliopsida</taxon>
        <taxon>eudicotyledons</taxon>
        <taxon>Gunneridae</taxon>
        <taxon>Pentapetalae</taxon>
        <taxon>rosids</taxon>
        <taxon>malvids</taxon>
        <taxon>Brassicales</taxon>
        <taxon>Brassicaceae</taxon>
        <taxon>Camelineae</taxon>
        <taxon>Arabidopsis</taxon>
    </lineage>
</organism>
<reference key="1">
    <citation type="journal article" date="1998" name="Nature">
        <title>Analysis of 1.9 Mb of contiguous sequence from chromosome 4 of Arabidopsis thaliana.</title>
        <authorList>
            <person name="Bevan M."/>
            <person name="Bancroft I."/>
            <person name="Bent E."/>
            <person name="Love K."/>
            <person name="Goodman H.M."/>
            <person name="Dean C."/>
            <person name="Bergkamp R."/>
            <person name="Dirkse W."/>
            <person name="van Staveren M."/>
            <person name="Stiekema W."/>
            <person name="Drost L."/>
            <person name="Ridley P."/>
            <person name="Hudson S.-A."/>
            <person name="Patel K."/>
            <person name="Murphy G."/>
            <person name="Piffanelli P."/>
            <person name="Wedler H."/>
            <person name="Wedler E."/>
            <person name="Wambutt R."/>
            <person name="Weitzenegger T."/>
            <person name="Pohl T."/>
            <person name="Terryn N."/>
            <person name="Gielen J."/>
            <person name="Villarroel R."/>
            <person name="De Clercq R."/>
            <person name="van Montagu M."/>
            <person name="Lecharny A."/>
            <person name="Aubourg S."/>
            <person name="Gy I."/>
            <person name="Kreis M."/>
            <person name="Lao N."/>
            <person name="Kavanagh T."/>
            <person name="Hempel S."/>
            <person name="Kotter P."/>
            <person name="Entian K.-D."/>
            <person name="Rieger M."/>
            <person name="Schaefer M."/>
            <person name="Funk B."/>
            <person name="Mueller-Auer S."/>
            <person name="Silvey M."/>
            <person name="James R."/>
            <person name="Monfort A."/>
            <person name="Pons A."/>
            <person name="Puigdomenech P."/>
            <person name="Douka A."/>
            <person name="Voukelatou E."/>
            <person name="Milioni D."/>
            <person name="Hatzopoulos P."/>
            <person name="Piravandi E."/>
            <person name="Obermaier B."/>
            <person name="Hilbert H."/>
            <person name="Duesterhoeft A."/>
            <person name="Moores T."/>
            <person name="Jones J.D.G."/>
            <person name="Eneva T."/>
            <person name="Palme K."/>
            <person name="Benes V."/>
            <person name="Rechmann S."/>
            <person name="Ansorge W."/>
            <person name="Cooke R."/>
            <person name="Berger C."/>
            <person name="Delseny M."/>
            <person name="Voet M."/>
            <person name="Volckaert G."/>
            <person name="Mewes H.-W."/>
            <person name="Klosterman S."/>
            <person name="Schueller C."/>
            <person name="Chalwatzis N."/>
        </authorList>
    </citation>
    <scope>NUCLEOTIDE SEQUENCE [LARGE SCALE GENOMIC DNA]</scope>
    <source>
        <strain>cv. Columbia</strain>
    </source>
</reference>
<reference key="2">
    <citation type="journal article" date="1999" name="Nature">
        <title>Sequence and analysis of chromosome 4 of the plant Arabidopsis thaliana.</title>
        <authorList>
            <person name="Mayer K.F.X."/>
            <person name="Schueller C."/>
            <person name="Wambutt R."/>
            <person name="Murphy G."/>
            <person name="Volckaert G."/>
            <person name="Pohl T."/>
            <person name="Duesterhoeft A."/>
            <person name="Stiekema W."/>
            <person name="Entian K.-D."/>
            <person name="Terryn N."/>
            <person name="Harris B."/>
            <person name="Ansorge W."/>
            <person name="Brandt P."/>
            <person name="Grivell L.A."/>
            <person name="Rieger M."/>
            <person name="Weichselgartner M."/>
            <person name="de Simone V."/>
            <person name="Obermaier B."/>
            <person name="Mache R."/>
            <person name="Mueller M."/>
            <person name="Kreis M."/>
            <person name="Delseny M."/>
            <person name="Puigdomenech P."/>
            <person name="Watson M."/>
            <person name="Schmidtheini T."/>
            <person name="Reichert B."/>
            <person name="Portetelle D."/>
            <person name="Perez-Alonso M."/>
            <person name="Boutry M."/>
            <person name="Bancroft I."/>
            <person name="Vos P."/>
            <person name="Hoheisel J."/>
            <person name="Zimmermann W."/>
            <person name="Wedler H."/>
            <person name="Ridley P."/>
            <person name="Langham S.-A."/>
            <person name="McCullagh B."/>
            <person name="Bilham L."/>
            <person name="Robben J."/>
            <person name="van der Schueren J."/>
            <person name="Grymonprez B."/>
            <person name="Chuang Y.-J."/>
            <person name="Vandenbussche F."/>
            <person name="Braeken M."/>
            <person name="Weltjens I."/>
            <person name="Voet M."/>
            <person name="Bastiaens I."/>
            <person name="Aert R."/>
            <person name="Defoor E."/>
            <person name="Weitzenegger T."/>
            <person name="Bothe G."/>
            <person name="Ramsperger U."/>
            <person name="Hilbert H."/>
            <person name="Braun M."/>
            <person name="Holzer E."/>
            <person name="Brandt A."/>
            <person name="Peters S."/>
            <person name="van Staveren M."/>
            <person name="Dirkse W."/>
            <person name="Mooijman P."/>
            <person name="Klein Lankhorst R."/>
            <person name="Rose M."/>
            <person name="Hauf J."/>
            <person name="Koetter P."/>
            <person name="Berneiser S."/>
            <person name="Hempel S."/>
            <person name="Feldpausch M."/>
            <person name="Lamberth S."/>
            <person name="Van den Daele H."/>
            <person name="De Keyser A."/>
            <person name="Buysshaert C."/>
            <person name="Gielen J."/>
            <person name="Villarroel R."/>
            <person name="De Clercq R."/>
            <person name="van Montagu M."/>
            <person name="Rogers J."/>
            <person name="Cronin A."/>
            <person name="Quail M.A."/>
            <person name="Bray-Allen S."/>
            <person name="Clark L."/>
            <person name="Doggett J."/>
            <person name="Hall S."/>
            <person name="Kay M."/>
            <person name="Lennard N."/>
            <person name="McLay K."/>
            <person name="Mayes R."/>
            <person name="Pettett A."/>
            <person name="Rajandream M.A."/>
            <person name="Lyne M."/>
            <person name="Benes V."/>
            <person name="Rechmann S."/>
            <person name="Borkova D."/>
            <person name="Bloecker H."/>
            <person name="Scharfe M."/>
            <person name="Grimm M."/>
            <person name="Loehnert T.-H."/>
            <person name="Dose S."/>
            <person name="de Haan M."/>
            <person name="Maarse A.C."/>
            <person name="Schaefer M."/>
            <person name="Mueller-Auer S."/>
            <person name="Gabel C."/>
            <person name="Fuchs M."/>
            <person name="Fartmann B."/>
            <person name="Granderath K."/>
            <person name="Dauner D."/>
            <person name="Herzl A."/>
            <person name="Neumann S."/>
            <person name="Argiriou A."/>
            <person name="Vitale D."/>
            <person name="Liguori R."/>
            <person name="Piravandi E."/>
            <person name="Massenet O."/>
            <person name="Quigley F."/>
            <person name="Clabauld G."/>
            <person name="Muendlein A."/>
            <person name="Felber R."/>
            <person name="Schnabl S."/>
            <person name="Hiller R."/>
            <person name="Schmidt W."/>
            <person name="Lecharny A."/>
            <person name="Aubourg S."/>
            <person name="Chefdor F."/>
            <person name="Cooke R."/>
            <person name="Berger C."/>
            <person name="Monfort A."/>
            <person name="Casacuberta E."/>
            <person name="Gibbons T."/>
            <person name="Weber N."/>
            <person name="Vandenbol M."/>
            <person name="Bargues M."/>
            <person name="Terol J."/>
            <person name="Torres A."/>
            <person name="Perez-Perez A."/>
            <person name="Purnelle B."/>
            <person name="Bent E."/>
            <person name="Johnson S."/>
            <person name="Tacon D."/>
            <person name="Jesse T."/>
            <person name="Heijnen L."/>
            <person name="Schwarz S."/>
            <person name="Scholler P."/>
            <person name="Heber S."/>
            <person name="Francs P."/>
            <person name="Bielke C."/>
            <person name="Frishman D."/>
            <person name="Haase D."/>
            <person name="Lemcke K."/>
            <person name="Mewes H.-W."/>
            <person name="Stocker S."/>
            <person name="Zaccaria P."/>
            <person name="Bevan M."/>
            <person name="Wilson R.K."/>
            <person name="de la Bastide M."/>
            <person name="Habermann K."/>
            <person name="Parnell L."/>
            <person name="Dedhia N."/>
            <person name="Gnoj L."/>
            <person name="Schutz K."/>
            <person name="Huang E."/>
            <person name="Spiegel L."/>
            <person name="Sekhon M."/>
            <person name="Murray J."/>
            <person name="Sheet P."/>
            <person name="Cordes M."/>
            <person name="Abu-Threideh J."/>
            <person name="Stoneking T."/>
            <person name="Kalicki J."/>
            <person name="Graves T."/>
            <person name="Harmon G."/>
            <person name="Edwards J."/>
            <person name="Latreille P."/>
            <person name="Courtney L."/>
            <person name="Cloud J."/>
            <person name="Abbott A."/>
            <person name="Scott K."/>
            <person name="Johnson D."/>
            <person name="Minx P."/>
            <person name="Bentley D."/>
            <person name="Fulton B."/>
            <person name="Miller N."/>
            <person name="Greco T."/>
            <person name="Kemp K."/>
            <person name="Kramer J."/>
            <person name="Fulton L."/>
            <person name="Mardis E."/>
            <person name="Dante M."/>
            <person name="Pepin K."/>
            <person name="Hillier L.W."/>
            <person name="Nelson J."/>
            <person name="Spieth J."/>
            <person name="Ryan E."/>
            <person name="Andrews S."/>
            <person name="Geisel C."/>
            <person name="Layman D."/>
            <person name="Du H."/>
            <person name="Ali J."/>
            <person name="Berghoff A."/>
            <person name="Jones K."/>
            <person name="Drone K."/>
            <person name="Cotton M."/>
            <person name="Joshu C."/>
            <person name="Antonoiu B."/>
            <person name="Zidanic M."/>
            <person name="Strong C."/>
            <person name="Sun H."/>
            <person name="Lamar B."/>
            <person name="Yordan C."/>
            <person name="Ma P."/>
            <person name="Zhong J."/>
            <person name="Preston R."/>
            <person name="Vil D."/>
            <person name="Shekher M."/>
            <person name="Matero A."/>
            <person name="Shah R."/>
            <person name="Swaby I.K."/>
            <person name="O'Shaughnessy A."/>
            <person name="Rodriguez M."/>
            <person name="Hoffman J."/>
            <person name="Till S."/>
            <person name="Granat S."/>
            <person name="Shohdy N."/>
            <person name="Hasegawa A."/>
            <person name="Hameed A."/>
            <person name="Lodhi M."/>
            <person name="Johnson A."/>
            <person name="Chen E."/>
            <person name="Marra M.A."/>
            <person name="Martienssen R."/>
            <person name="McCombie W.R."/>
        </authorList>
    </citation>
    <scope>NUCLEOTIDE SEQUENCE [LARGE SCALE GENOMIC DNA]</scope>
    <source>
        <strain>cv. Columbia</strain>
    </source>
</reference>
<reference key="3">
    <citation type="journal article" date="2017" name="Plant J.">
        <title>Araport11: a complete reannotation of the Arabidopsis thaliana reference genome.</title>
        <authorList>
            <person name="Cheng C.Y."/>
            <person name="Krishnakumar V."/>
            <person name="Chan A.P."/>
            <person name="Thibaud-Nissen F."/>
            <person name="Schobel S."/>
            <person name="Town C.D."/>
        </authorList>
    </citation>
    <scope>GENOME REANNOTATION</scope>
    <source>
        <strain>cv. Columbia</strain>
    </source>
</reference>
<reference key="4">
    <citation type="journal article" date="2003" name="Science">
        <title>Empirical analysis of transcriptional activity in the Arabidopsis genome.</title>
        <authorList>
            <person name="Yamada K."/>
            <person name="Lim J."/>
            <person name="Dale J.M."/>
            <person name="Chen H."/>
            <person name="Shinn P."/>
            <person name="Palm C.J."/>
            <person name="Southwick A.M."/>
            <person name="Wu H.C."/>
            <person name="Kim C.J."/>
            <person name="Nguyen M."/>
            <person name="Pham P.K."/>
            <person name="Cheuk R.F."/>
            <person name="Karlin-Newmann G."/>
            <person name="Liu S.X."/>
            <person name="Lam B."/>
            <person name="Sakano H."/>
            <person name="Wu T."/>
            <person name="Yu G."/>
            <person name="Miranda M."/>
            <person name="Quach H.L."/>
            <person name="Tripp M."/>
            <person name="Chang C.H."/>
            <person name="Lee J.M."/>
            <person name="Toriumi M.J."/>
            <person name="Chan M.M."/>
            <person name="Tang C.C."/>
            <person name="Onodera C.S."/>
            <person name="Deng J.M."/>
            <person name="Akiyama K."/>
            <person name="Ansari Y."/>
            <person name="Arakawa T."/>
            <person name="Banh J."/>
            <person name="Banno F."/>
            <person name="Bowser L."/>
            <person name="Brooks S.Y."/>
            <person name="Carninci P."/>
            <person name="Chao Q."/>
            <person name="Choy N."/>
            <person name="Enju A."/>
            <person name="Goldsmith A.D."/>
            <person name="Gurjal M."/>
            <person name="Hansen N.F."/>
            <person name="Hayashizaki Y."/>
            <person name="Johnson-Hopson C."/>
            <person name="Hsuan V.W."/>
            <person name="Iida K."/>
            <person name="Karnes M."/>
            <person name="Khan S."/>
            <person name="Koesema E."/>
            <person name="Ishida J."/>
            <person name="Jiang P.X."/>
            <person name="Jones T."/>
            <person name="Kawai J."/>
            <person name="Kamiya A."/>
            <person name="Meyers C."/>
            <person name="Nakajima M."/>
            <person name="Narusaka M."/>
            <person name="Seki M."/>
            <person name="Sakurai T."/>
            <person name="Satou M."/>
            <person name="Tamse R."/>
            <person name="Vaysberg M."/>
            <person name="Wallender E.K."/>
            <person name="Wong C."/>
            <person name="Yamamura Y."/>
            <person name="Yuan S."/>
            <person name="Shinozaki K."/>
            <person name="Davis R.W."/>
            <person name="Theologis A."/>
            <person name="Ecker J.R."/>
        </authorList>
    </citation>
    <scope>NUCLEOTIDE SEQUENCE [LARGE SCALE MRNA]</scope>
    <source>
        <strain>cv. Columbia</strain>
    </source>
</reference>
<reference key="5">
    <citation type="submission" date="2002-03" db="EMBL/GenBank/DDBJ databases">
        <title>Full-length cDNA from Arabidopsis thaliana.</title>
        <authorList>
            <person name="Brover V.V."/>
            <person name="Troukhan M.E."/>
            <person name="Alexandrov N.A."/>
            <person name="Lu Y.-P."/>
            <person name="Flavell R.B."/>
            <person name="Feldmann K.A."/>
        </authorList>
    </citation>
    <scope>NUCLEOTIDE SEQUENCE [LARGE SCALE MRNA]</scope>
</reference>
<reference key="6">
    <citation type="journal article" date="2012" name="J. Exp. Bot.">
        <title>The interaction of the novel 30C02 cyst nematode effector protein with a plant beta-1,3-endoglucanase may suppress host defence to promote parasitism.</title>
        <authorList>
            <person name="Hamamouch N."/>
            <person name="Li C."/>
            <person name="Hewezi T."/>
            <person name="Baum T.J."/>
            <person name="Mitchum M.G."/>
            <person name="Hussey R.S."/>
            <person name="Vodkin L.O."/>
            <person name="Davis E.L."/>
        </authorList>
    </citation>
    <scope>FUNCTION</scope>
    <scope>INTERACTION WITH THE 30C02 EFFECTOR PROTEIN OF THE BEET CYST NEMATODE HETERODERA SCHACHTII (MICROBIAL INFECTION)</scope>
    <scope>INDUCTION</scope>
</reference>
<reference key="7">
    <citation type="journal article" date="2013" name="Mol. Plant Microbe Interact.">
        <title>Subcellular dynamics and role of Arabidopsis beta-1,3-glucanases in cell-to-cell movement of tobamoviruses.</title>
        <authorList>
            <person name="Zavaliev R."/>
            <person name="Levy A."/>
            <person name="Gera A."/>
            <person name="Epel B.L."/>
        </authorList>
    </citation>
    <scope>INDUCTION</scope>
</reference>
<dbReference type="EC" id="3.2.1.39" evidence="5"/>
<dbReference type="EMBL" id="Z97340">
    <property type="protein sequence ID" value="CAB10405.1"/>
    <property type="status" value="ALT_FRAME"/>
    <property type="molecule type" value="Genomic_DNA"/>
</dbReference>
<dbReference type="EMBL" id="AL161543">
    <property type="protein sequence ID" value="CAB78668.1"/>
    <property type="status" value="ALT_FRAME"/>
    <property type="molecule type" value="Genomic_DNA"/>
</dbReference>
<dbReference type="EMBL" id="CP002687">
    <property type="protein sequence ID" value="AEE83722.1"/>
    <property type="molecule type" value="Genomic_DNA"/>
</dbReference>
<dbReference type="EMBL" id="AY064130">
    <property type="protein sequence ID" value="AAL36038.1"/>
    <property type="molecule type" value="mRNA"/>
</dbReference>
<dbReference type="EMBL" id="AY143867">
    <property type="protein sequence ID" value="AAN28806.1"/>
    <property type="molecule type" value="mRNA"/>
</dbReference>
<dbReference type="EMBL" id="AY087106">
    <property type="protein sequence ID" value="AAM64664.1"/>
    <property type="status" value="ALT_FRAME"/>
    <property type="molecule type" value="mRNA"/>
</dbReference>
<dbReference type="PIR" id="C71429">
    <property type="entry name" value="C71429"/>
</dbReference>
<dbReference type="RefSeq" id="NP_193361.4">
    <property type="nucleotide sequence ID" value="NM_117722.7"/>
</dbReference>
<dbReference type="SMR" id="Q8VZJ2"/>
<dbReference type="FunCoup" id="Q8VZJ2">
    <property type="interactions" value="34"/>
</dbReference>
<dbReference type="STRING" id="3702.Q8VZJ2"/>
<dbReference type="CAZy" id="GH17">
    <property type="family name" value="Glycoside Hydrolase Family 17"/>
</dbReference>
<dbReference type="PaxDb" id="3702-AT4G16260.1"/>
<dbReference type="ProteomicsDB" id="241217"/>
<dbReference type="EnsemblPlants" id="AT4G16260.1">
    <property type="protein sequence ID" value="AT4G16260.1"/>
    <property type="gene ID" value="AT4G16260"/>
</dbReference>
<dbReference type="GeneID" id="827320"/>
<dbReference type="Gramene" id="AT4G16260.1">
    <property type="protein sequence ID" value="AT4G16260.1"/>
    <property type="gene ID" value="AT4G16260"/>
</dbReference>
<dbReference type="KEGG" id="ath:AT4G16260"/>
<dbReference type="Araport" id="AT4G16260"/>
<dbReference type="TAIR" id="AT4G16260"/>
<dbReference type="eggNOG" id="ENOG502QQ3M">
    <property type="taxonomic scope" value="Eukaryota"/>
</dbReference>
<dbReference type="HOGENOM" id="CLU_024953_0_0_1"/>
<dbReference type="InParanoid" id="Q8VZJ2"/>
<dbReference type="OMA" id="WEVIELY"/>
<dbReference type="PhylomeDB" id="Q8VZJ2"/>
<dbReference type="BioCyc" id="ARA:AT4G16260-MONOMER"/>
<dbReference type="PRO" id="PR:Q8VZJ2"/>
<dbReference type="Proteomes" id="UP000006548">
    <property type="component" value="Chromosome 4"/>
</dbReference>
<dbReference type="ExpressionAtlas" id="Q8VZJ2">
    <property type="expression patterns" value="baseline and differential"/>
</dbReference>
<dbReference type="GO" id="GO:0005576">
    <property type="term" value="C:extracellular region"/>
    <property type="evidence" value="ECO:0007669"/>
    <property type="project" value="UniProtKB-SubCell"/>
</dbReference>
<dbReference type="GO" id="GO:0000325">
    <property type="term" value="C:plant-type vacuole"/>
    <property type="evidence" value="ECO:0007005"/>
    <property type="project" value="TAIR"/>
</dbReference>
<dbReference type="GO" id="GO:0099503">
    <property type="term" value="C:secretory vesicle"/>
    <property type="evidence" value="ECO:0007005"/>
    <property type="project" value="TAIR"/>
</dbReference>
<dbReference type="GO" id="GO:0042973">
    <property type="term" value="F:glucan endo-1,3-beta-D-glucosidase activity"/>
    <property type="evidence" value="ECO:0007669"/>
    <property type="project" value="UniProtKB-EC"/>
</dbReference>
<dbReference type="GO" id="GO:0005975">
    <property type="term" value="P:carbohydrate metabolic process"/>
    <property type="evidence" value="ECO:0007669"/>
    <property type="project" value="InterPro"/>
</dbReference>
<dbReference type="GO" id="GO:0050832">
    <property type="term" value="P:defense response to fungus"/>
    <property type="evidence" value="ECO:0000314"/>
    <property type="project" value="TAIR"/>
</dbReference>
<dbReference type="GO" id="GO:0002215">
    <property type="term" value="P:defense response to nematode"/>
    <property type="evidence" value="ECO:0000315"/>
    <property type="project" value="TAIR"/>
</dbReference>
<dbReference type="FunFam" id="3.20.20.80:FF:000010">
    <property type="entry name" value="glucan endo-1,3-beta-glucosidase, basic"/>
    <property type="match status" value="1"/>
</dbReference>
<dbReference type="Gene3D" id="3.20.20.80">
    <property type="entry name" value="Glycosidases"/>
    <property type="match status" value="1"/>
</dbReference>
<dbReference type="InterPro" id="IPR000490">
    <property type="entry name" value="Glyco_hydro_17"/>
</dbReference>
<dbReference type="InterPro" id="IPR044965">
    <property type="entry name" value="Glyco_hydro_17_plant"/>
</dbReference>
<dbReference type="InterPro" id="IPR017853">
    <property type="entry name" value="Glycoside_hydrolase_SF"/>
</dbReference>
<dbReference type="PANTHER" id="PTHR32227">
    <property type="entry name" value="GLUCAN ENDO-1,3-BETA-GLUCOSIDASE BG1-RELATED-RELATED"/>
    <property type="match status" value="1"/>
</dbReference>
<dbReference type="Pfam" id="PF00332">
    <property type="entry name" value="Glyco_hydro_17"/>
    <property type="match status" value="1"/>
</dbReference>
<dbReference type="SUPFAM" id="SSF51445">
    <property type="entry name" value="(Trans)glycosidases"/>
    <property type="match status" value="1"/>
</dbReference>
<dbReference type="PROSITE" id="PS00587">
    <property type="entry name" value="GLYCOSYL_HYDROL_F17"/>
    <property type="match status" value="1"/>
</dbReference>
<name>BGNEM_ARATH</name>
<gene>
    <name evidence="6" type="ordered locus">At4g16260</name>
    <name evidence="7" type="ORF">dl4170c</name>
</gene>
<evidence type="ECO:0000250" key="1">
    <source>
        <dbReference type="UniProtKB" id="O22317"/>
    </source>
</evidence>
<evidence type="ECO:0000255" key="2"/>
<evidence type="ECO:0000269" key="3">
    <source>
    </source>
</evidence>
<evidence type="ECO:0000269" key="4">
    <source>
    </source>
</evidence>
<evidence type="ECO:0000305" key="5"/>
<evidence type="ECO:0000312" key="6">
    <source>
        <dbReference type="Araport" id="AT4G16260"/>
    </source>
</evidence>
<evidence type="ECO:0000312" key="7">
    <source>
        <dbReference type="EMBL" id="CAB10405.1"/>
    </source>
</evidence>